<name>NORM_RHIME</name>
<protein>
    <recommendedName>
        <fullName>Probable multidrug resistance protein NorM</fullName>
    </recommendedName>
    <alternativeName>
        <fullName>Multidrug-efflux transporter</fullName>
    </alternativeName>
</protein>
<proteinExistence type="inferred from homology"/>
<gene>
    <name type="primary">norM</name>
    <name type="ordered locus">R01580</name>
    <name type="ORF">SMc01211</name>
</gene>
<comment type="function">
    <text evidence="1">Multidrug efflux pump.</text>
</comment>
<comment type="subcellular location">
    <subcellularLocation>
        <location evidence="1">Cell inner membrane</location>
        <topology evidence="1">Multi-pass membrane protein</topology>
    </subcellularLocation>
</comment>
<comment type="similarity">
    <text evidence="3">Belongs to the multi antimicrobial extrusion (MATE) (TC 2.A.66.1) family.</text>
</comment>
<feature type="chain" id="PRO_0000164236" description="Probable multidrug resistance protein NorM">
    <location>
        <begin position="1"/>
        <end position="467"/>
    </location>
</feature>
<feature type="transmembrane region" description="Helical" evidence="2">
    <location>
        <begin position="20"/>
        <end position="42"/>
    </location>
</feature>
<feature type="transmembrane region" description="Helical" evidence="2">
    <location>
        <begin position="57"/>
        <end position="79"/>
    </location>
</feature>
<feature type="transmembrane region" description="Helical" evidence="2">
    <location>
        <begin position="107"/>
        <end position="129"/>
    </location>
</feature>
<feature type="transmembrane region" description="Helical" evidence="2">
    <location>
        <begin position="144"/>
        <end position="163"/>
    </location>
</feature>
<feature type="transmembrane region" description="Helical" evidence="2">
    <location>
        <begin position="170"/>
        <end position="192"/>
    </location>
</feature>
<feature type="transmembrane region" description="Helical" evidence="2">
    <location>
        <begin position="202"/>
        <end position="224"/>
    </location>
</feature>
<feature type="transmembrane region" description="Helical" evidence="2">
    <location>
        <begin position="250"/>
        <end position="272"/>
    </location>
</feature>
<feature type="transmembrane region" description="Helical" evidence="2">
    <location>
        <begin position="292"/>
        <end position="314"/>
    </location>
</feature>
<feature type="transmembrane region" description="Helical" evidence="2">
    <location>
        <begin position="326"/>
        <end position="348"/>
    </location>
</feature>
<feature type="transmembrane region" description="Helical" evidence="2">
    <location>
        <begin position="368"/>
        <end position="390"/>
    </location>
</feature>
<feature type="transmembrane region" description="Helical" evidence="2">
    <location>
        <begin position="403"/>
        <end position="425"/>
    </location>
</feature>
<feature type="transmembrane region" description="Helical" evidence="2">
    <location>
        <begin position="429"/>
        <end position="451"/>
    </location>
</feature>
<reference key="1">
    <citation type="journal article" date="2001" name="Proc. Natl. Acad. Sci. U.S.A.">
        <title>Analysis of the chromosome sequence of the legume symbiont Sinorhizobium meliloti strain 1021.</title>
        <authorList>
            <person name="Capela D."/>
            <person name="Barloy-Hubler F."/>
            <person name="Gouzy J."/>
            <person name="Bothe G."/>
            <person name="Ampe F."/>
            <person name="Batut J."/>
            <person name="Boistard P."/>
            <person name="Becker A."/>
            <person name="Boutry M."/>
            <person name="Cadieu E."/>
            <person name="Dreano S."/>
            <person name="Gloux S."/>
            <person name="Godrie T."/>
            <person name="Goffeau A."/>
            <person name="Kahn D."/>
            <person name="Kiss E."/>
            <person name="Lelaure V."/>
            <person name="Masuy D."/>
            <person name="Pohl T."/>
            <person name="Portetelle D."/>
            <person name="Puehler A."/>
            <person name="Purnelle B."/>
            <person name="Ramsperger U."/>
            <person name="Renard C."/>
            <person name="Thebault P."/>
            <person name="Vandenbol M."/>
            <person name="Weidner S."/>
            <person name="Galibert F."/>
        </authorList>
    </citation>
    <scope>NUCLEOTIDE SEQUENCE [LARGE SCALE GENOMIC DNA]</scope>
    <source>
        <strain>1021</strain>
    </source>
</reference>
<reference key="2">
    <citation type="journal article" date="2001" name="Science">
        <title>The composite genome of the legume symbiont Sinorhizobium meliloti.</title>
        <authorList>
            <person name="Galibert F."/>
            <person name="Finan T.M."/>
            <person name="Long S.R."/>
            <person name="Puehler A."/>
            <person name="Abola P."/>
            <person name="Ampe F."/>
            <person name="Barloy-Hubler F."/>
            <person name="Barnett M.J."/>
            <person name="Becker A."/>
            <person name="Boistard P."/>
            <person name="Bothe G."/>
            <person name="Boutry M."/>
            <person name="Bowser L."/>
            <person name="Buhrmester J."/>
            <person name="Cadieu E."/>
            <person name="Capela D."/>
            <person name="Chain P."/>
            <person name="Cowie A."/>
            <person name="Davis R.W."/>
            <person name="Dreano S."/>
            <person name="Federspiel N.A."/>
            <person name="Fisher R.F."/>
            <person name="Gloux S."/>
            <person name="Godrie T."/>
            <person name="Goffeau A."/>
            <person name="Golding B."/>
            <person name="Gouzy J."/>
            <person name="Gurjal M."/>
            <person name="Hernandez-Lucas I."/>
            <person name="Hong A."/>
            <person name="Huizar L."/>
            <person name="Hyman R.W."/>
            <person name="Jones T."/>
            <person name="Kahn D."/>
            <person name="Kahn M.L."/>
            <person name="Kalman S."/>
            <person name="Keating D.H."/>
            <person name="Kiss E."/>
            <person name="Komp C."/>
            <person name="Lelaure V."/>
            <person name="Masuy D."/>
            <person name="Palm C."/>
            <person name="Peck M.C."/>
            <person name="Pohl T.M."/>
            <person name="Portetelle D."/>
            <person name="Purnelle B."/>
            <person name="Ramsperger U."/>
            <person name="Surzycki R."/>
            <person name="Thebault P."/>
            <person name="Vandenbol M."/>
            <person name="Vorhoelter F.J."/>
            <person name="Weidner S."/>
            <person name="Wells D.H."/>
            <person name="Wong K."/>
            <person name="Yeh K.-C."/>
            <person name="Batut J."/>
        </authorList>
    </citation>
    <scope>NUCLEOTIDE SEQUENCE [LARGE SCALE GENOMIC DNA]</scope>
    <source>
        <strain>1021</strain>
    </source>
</reference>
<evidence type="ECO:0000250" key="1"/>
<evidence type="ECO:0000255" key="2"/>
<evidence type="ECO:0000305" key="3"/>
<keyword id="KW-0050">Antiport</keyword>
<keyword id="KW-0997">Cell inner membrane</keyword>
<keyword id="KW-1003">Cell membrane</keyword>
<keyword id="KW-0406">Ion transport</keyword>
<keyword id="KW-0472">Membrane</keyword>
<keyword id="KW-1185">Reference proteome</keyword>
<keyword id="KW-0812">Transmembrane</keyword>
<keyword id="KW-1133">Transmembrane helix</keyword>
<keyword id="KW-0813">Transport</keyword>
<accession>Q92PZ0</accession>
<organism>
    <name type="scientific">Rhizobium meliloti (strain 1021)</name>
    <name type="common">Ensifer meliloti</name>
    <name type="synonym">Sinorhizobium meliloti</name>
    <dbReference type="NCBI Taxonomy" id="266834"/>
    <lineage>
        <taxon>Bacteria</taxon>
        <taxon>Pseudomonadati</taxon>
        <taxon>Pseudomonadota</taxon>
        <taxon>Alphaproteobacteria</taxon>
        <taxon>Hyphomicrobiales</taxon>
        <taxon>Rhizobiaceae</taxon>
        <taxon>Sinorhizobium/Ensifer group</taxon>
        <taxon>Sinorhizobium</taxon>
    </lineage>
</organism>
<dbReference type="EMBL" id="AL591688">
    <property type="protein sequence ID" value="CAC46159.1"/>
    <property type="molecule type" value="Genomic_DNA"/>
</dbReference>
<dbReference type="RefSeq" id="NP_385686.1">
    <property type="nucleotide sequence ID" value="NC_003047.1"/>
</dbReference>
<dbReference type="RefSeq" id="WP_010969319.1">
    <property type="nucleotide sequence ID" value="NC_003047.1"/>
</dbReference>
<dbReference type="SMR" id="Q92PZ0"/>
<dbReference type="EnsemblBacteria" id="CAC46159">
    <property type="protein sequence ID" value="CAC46159"/>
    <property type="gene ID" value="SMc01211"/>
</dbReference>
<dbReference type="KEGG" id="sme:SMc01211"/>
<dbReference type="PATRIC" id="fig|266834.11.peg.3007"/>
<dbReference type="eggNOG" id="COG0534">
    <property type="taxonomic scope" value="Bacteria"/>
</dbReference>
<dbReference type="HOGENOM" id="CLU_012893_6_3_5"/>
<dbReference type="OrthoDB" id="9780160at2"/>
<dbReference type="Proteomes" id="UP000001976">
    <property type="component" value="Chromosome"/>
</dbReference>
<dbReference type="GO" id="GO:0005886">
    <property type="term" value="C:plasma membrane"/>
    <property type="evidence" value="ECO:0007669"/>
    <property type="project" value="UniProtKB-SubCell"/>
</dbReference>
<dbReference type="GO" id="GO:0015297">
    <property type="term" value="F:antiporter activity"/>
    <property type="evidence" value="ECO:0007669"/>
    <property type="project" value="UniProtKB-KW"/>
</dbReference>
<dbReference type="GO" id="GO:0042910">
    <property type="term" value="F:xenobiotic transmembrane transporter activity"/>
    <property type="evidence" value="ECO:0007669"/>
    <property type="project" value="InterPro"/>
</dbReference>
<dbReference type="GO" id="GO:0006811">
    <property type="term" value="P:monoatomic ion transport"/>
    <property type="evidence" value="ECO:0007669"/>
    <property type="project" value="UniProtKB-KW"/>
</dbReference>
<dbReference type="CDD" id="cd13131">
    <property type="entry name" value="MATE_NorM_like"/>
    <property type="match status" value="1"/>
</dbReference>
<dbReference type="InterPro" id="IPR002528">
    <property type="entry name" value="MATE_fam"/>
</dbReference>
<dbReference type="InterPro" id="IPR050222">
    <property type="entry name" value="MATE_MdtK"/>
</dbReference>
<dbReference type="InterPro" id="IPR048279">
    <property type="entry name" value="MdtK-like"/>
</dbReference>
<dbReference type="NCBIfam" id="TIGR00797">
    <property type="entry name" value="matE"/>
    <property type="match status" value="1"/>
</dbReference>
<dbReference type="PANTHER" id="PTHR43298:SF2">
    <property type="entry name" value="FMN_FAD EXPORTER YEEO-RELATED"/>
    <property type="match status" value="1"/>
</dbReference>
<dbReference type="PANTHER" id="PTHR43298">
    <property type="entry name" value="MULTIDRUG RESISTANCE PROTEIN NORM-RELATED"/>
    <property type="match status" value="1"/>
</dbReference>
<dbReference type="Pfam" id="PF01554">
    <property type="entry name" value="MatE"/>
    <property type="match status" value="2"/>
</dbReference>
<dbReference type="PIRSF" id="PIRSF006603">
    <property type="entry name" value="DinF"/>
    <property type="match status" value="1"/>
</dbReference>
<sequence length="467" mass="49714">MLTATKDLVLAQSDNSWPTHFRASLYLGVPFIGAQLAQLAINTTDVLMVGQLGATQLAAIILATQVFFTIFIFGSGFANAVVPMVAQAQGRGDQVSVRRSVRMGMWVVLLYGVLTAPVLWMAEPILLFAGQKPEVAALAGEYLHIAQWAIFPSLIFMVLRAFLSGLERAGVILYVTLVTLVLNAALCYVLIFGHFGFPELGIFGAAVAALGVALLGAALTIGYIRRQPELHRFELFVRFWRPDWPAFGEVVHLGIPISVTILAEVSLFTVASLLMGTIGTIELAAHGIALQFASIAFMIPLGLAQAGTVRIGLAYGSGDMVGVKRAAIAVLTLGVGFAAVGSTIFALFPHELAGLYLDTRRPDAAEVLAFAGPLIVIAGAFQLVDGLQAIAAGMLRGLKDTTIPMILAMIAYWPIGFFCAWAFAFPLGFGGVGVWFGFVLGLASAALLLNWRFFRLLRRVSAAPAAS</sequence>